<dbReference type="EC" id="1.8.3.1"/>
<dbReference type="EMBL" id="AF200972">
    <property type="protein sequence ID" value="AAF13276.1"/>
    <property type="molecule type" value="mRNA"/>
</dbReference>
<dbReference type="EMBL" id="AB071965">
    <property type="protein sequence ID" value="BAC10904.1"/>
    <property type="molecule type" value="mRNA"/>
</dbReference>
<dbReference type="EMBL" id="AC010797">
    <property type="protein sequence ID" value="AAF03458.1"/>
    <property type="molecule type" value="Genomic_DNA"/>
</dbReference>
<dbReference type="EMBL" id="AC011664">
    <property type="protein sequence ID" value="AAF14844.1"/>
    <property type="molecule type" value="Genomic_DNA"/>
</dbReference>
<dbReference type="EMBL" id="CP002686">
    <property type="protein sequence ID" value="AEE73732.1"/>
    <property type="molecule type" value="Genomic_DNA"/>
</dbReference>
<dbReference type="EMBL" id="AF360247">
    <property type="protein sequence ID" value="AAK25957.1"/>
    <property type="molecule type" value="mRNA"/>
</dbReference>
<dbReference type="EMBL" id="AY133863">
    <property type="protein sequence ID" value="AAM91797.1"/>
    <property type="molecule type" value="mRNA"/>
</dbReference>
<dbReference type="RefSeq" id="NP_186840.1">
    <molecule id="Q9S850-1"/>
    <property type="nucleotide sequence ID" value="NM_111057.4"/>
</dbReference>
<dbReference type="PDB" id="1OGP">
    <property type="method" value="X-ray"/>
    <property type="resolution" value="2.60 A"/>
    <property type="chains" value="A/B/C/D/E/F=1-393"/>
</dbReference>
<dbReference type="PDBsum" id="1OGP"/>
<dbReference type="SMR" id="Q9S850"/>
<dbReference type="BioGRID" id="5452">
    <property type="interactions" value="3"/>
</dbReference>
<dbReference type="FunCoup" id="Q9S850">
    <property type="interactions" value="3554"/>
</dbReference>
<dbReference type="IntAct" id="Q9S850">
    <property type="interactions" value="1"/>
</dbReference>
<dbReference type="STRING" id="3702.Q9S850"/>
<dbReference type="PaxDb" id="3702-AT3G01910.1"/>
<dbReference type="ProteomicsDB" id="226766">
    <molecule id="Q9S850-1"/>
</dbReference>
<dbReference type="EnsemblPlants" id="AT3G01910.1">
    <molecule id="Q9S850-1"/>
    <property type="protein sequence ID" value="AT3G01910.1"/>
    <property type="gene ID" value="AT3G01910"/>
</dbReference>
<dbReference type="GeneID" id="820118"/>
<dbReference type="Gramene" id="AT3G01910.1">
    <molecule id="Q9S850-1"/>
    <property type="protein sequence ID" value="AT3G01910.1"/>
    <property type="gene ID" value="AT3G01910"/>
</dbReference>
<dbReference type="KEGG" id="ath:AT3G01910"/>
<dbReference type="Araport" id="AT3G01910"/>
<dbReference type="TAIR" id="AT3G01910">
    <property type="gene designation" value="SOX"/>
</dbReference>
<dbReference type="eggNOG" id="KOG0535">
    <property type="taxonomic scope" value="Eukaryota"/>
</dbReference>
<dbReference type="InParanoid" id="Q9S850"/>
<dbReference type="OMA" id="TWHVAEL"/>
<dbReference type="OrthoDB" id="10051395at2759"/>
<dbReference type="PhylomeDB" id="Q9S850"/>
<dbReference type="BioCyc" id="MetaCyc:AT3G01910-MONOMER"/>
<dbReference type="BRENDA" id="1.8.3.1">
    <property type="organism ID" value="399"/>
</dbReference>
<dbReference type="UniPathway" id="UPA00096"/>
<dbReference type="EvolutionaryTrace" id="Q9S850"/>
<dbReference type="PRO" id="PR:Q9S850"/>
<dbReference type="Proteomes" id="UP000006548">
    <property type="component" value="Chromosome 3"/>
</dbReference>
<dbReference type="ExpressionAtlas" id="Q9S850">
    <property type="expression patterns" value="baseline and differential"/>
</dbReference>
<dbReference type="GO" id="GO:0005829">
    <property type="term" value="C:cytosol"/>
    <property type="evidence" value="ECO:0007005"/>
    <property type="project" value="TAIR"/>
</dbReference>
<dbReference type="GO" id="GO:0005739">
    <property type="term" value="C:mitochondrion"/>
    <property type="evidence" value="ECO:0007005"/>
    <property type="project" value="TAIR"/>
</dbReference>
<dbReference type="GO" id="GO:0005777">
    <property type="term" value="C:peroxisome"/>
    <property type="evidence" value="ECO:0000314"/>
    <property type="project" value="TAIR"/>
</dbReference>
<dbReference type="GO" id="GO:0030151">
    <property type="term" value="F:molybdenum ion binding"/>
    <property type="evidence" value="ECO:0007669"/>
    <property type="project" value="InterPro"/>
</dbReference>
<dbReference type="GO" id="GO:0008482">
    <property type="term" value="F:sulfite oxidase activity"/>
    <property type="evidence" value="ECO:0000314"/>
    <property type="project" value="TAIR"/>
</dbReference>
<dbReference type="GO" id="GO:0015994">
    <property type="term" value="P:chlorophyll metabolic process"/>
    <property type="evidence" value="ECO:0000315"/>
    <property type="project" value="TAIR"/>
</dbReference>
<dbReference type="GO" id="GO:0010477">
    <property type="term" value="P:response to sulfur dioxide"/>
    <property type="evidence" value="ECO:0000315"/>
    <property type="project" value="TAIR"/>
</dbReference>
<dbReference type="GO" id="GO:0006790">
    <property type="term" value="P:sulfur compound metabolic process"/>
    <property type="evidence" value="ECO:0000314"/>
    <property type="project" value="TAIR"/>
</dbReference>
<dbReference type="CDD" id="cd02111">
    <property type="entry name" value="eukary_SO_Moco"/>
    <property type="match status" value="1"/>
</dbReference>
<dbReference type="FunFam" id="3.90.420.10:FF:000004">
    <property type="entry name" value="Sulfite oxidase"/>
    <property type="match status" value="1"/>
</dbReference>
<dbReference type="FunFam" id="2.60.40.650:FF:000002">
    <property type="entry name" value="sulfite oxidase"/>
    <property type="match status" value="1"/>
</dbReference>
<dbReference type="Gene3D" id="2.60.40.650">
    <property type="match status" value="1"/>
</dbReference>
<dbReference type="Gene3D" id="3.90.420.10">
    <property type="entry name" value="Oxidoreductase, molybdopterin-binding domain"/>
    <property type="match status" value="1"/>
</dbReference>
<dbReference type="InterPro" id="IPR014756">
    <property type="entry name" value="Ig_E-set"/>
</dbReference>
<dbReference type="InterPro" id="IPR005066">
    <property type="entry name" value="MoCF_OxRdtse_dimer"/>
</dbReference>
<dbReference type="InterPro" id="IPR008335">
    <property type="entry name" value="Mopterin_OxRdtase_euk"/>
</dbReference>
<dbReference type="InterPro" id="IPR000572">
    <property type="entry name" value="OxRdtase_Mopterin-bd_dom"/>
</dbReference>
<dbReference type="InterPro" id="IPR036374">
    <property type="entry name" value="OxRdtase_Mopterin-bd_sf"/>
</dbReference>
<dbReference type="PANTHER" id="PTHR19372:SF7">
    <property type="entry name" value="SULFITE OXIDASE, MITOCHONDRIAL"/>
    <property type="match status" value="1"/>
</dbReference>
<dbReference type="PANTHER" id="PTHR19372">
    <property type="entry name" value="SULFITE REDUCTASE"/>
    <property type="match status" value="1"/>
</dbReference>
<dbReference type="Pfam" id="PF03404">
    <property type="entry name" value="Mo-co_dimer"/>
    <property type="match status" value="1"/>
</dbReference>
<dbReference type="Pfam" id="PF00174">
    <property type="entry name" value="Oxidored_molyb"/>
    <property type="match status" value="1"/>
</dbReference>
<dbReference type="PRINTS" id="PR00407">
    <property type="entry name" value="EUMOPTERIN"/>
</dbReference>
<dbReference type="SUPFAM" id="SSF81296">
    <property type="entry name" value="E set domains"/>
    <property type="match status" value="1"/>
</dbReference>
<dbReference type="SUPFAM" id="SSF56524">
    <property type="entry name" value="Oxidoreductase molybdopterin-binding domain"/>
    <property type="match status" value="1"/>
</dbReference>
<protein>
    <recommendedName>
        <fullName>Sulfite oxidase</fullName>
        <ecNumber>1.8.3.1</ecNumber>
    </recommendedName>
    <alternativeName>
        <fullName>Moco-containing protein AtMCP</fullName>
        <shortName>At-SO</shortName>
        <shortName>AtSOX</shortName>
    </alternativeName>
</protein>
<feature type="chain" id="PRO_0000166077" description="Sulfite oxidase">
    <location>
        <begin position="1"/>
        <end position="393"/>
    </location>
</feature>
<feature type="region of interest" description="Disordered" evidence="2">
    <location>
        <begin position="1"/>
        <end position="27"/>
    </location>
</feature>
<feature type="region of interest" description="Moco domain">
    <location>
        <begin position="10"/>
        <end position="242"/>
    </location>
</feature>
<feature type="region of interest" description="Homodimerization">
    <location>
        <begin position="243"/>
        <end position="393"/>
    </location>
</feature>
<feature type="short sequence motif" description="Microbody targeting signal" evidence="1">
    <location>
        <begin position="391"/>
        <end position="393"/>
    </location>
</feature>
<feature type="binding site">
    <location>
        <begin position="49"/>
        <end position="53"/>
    </location>
    <ligand>
        <name>Mo-molybdopterin</name>
        <dbReference type="ChEBI" id="CHEBI:71302"/>
    </ligand>
</feature>
<feature type="binding site">
    <location>
        <position position="98"/>
    </location>
    <ligand>
        <name>Mo-molybdopterin</name>
        <dbReference type="ChEBI" id="CHEBI:71302"/>
    </ligand>
    <ligandPart>
        <name>Mo</name>
        <dbReference type="ChEBI" id="CHEBI:28685"/>
    </ligandPart>
</feature>
<feature type="binding site">
    <location>
        <begin position="159"/>
        <end position="161"/>
    </location>
    <ligand>
        <name>Mo-molybdopterin</name>
        <dbReference type="ChEBI" id="CHEBI:71302"/>
    </ligand>
</feature>
<feature type="binding site">
    <location>
        <position position="202"/>
    </location>
    <ligand>
        <name>Mo-molybdopterin</name>
        <dbReference type="ChEBI" id="CHEBI:71302"/>
    </ligand>
</feature>
<feature type="binding site">
    <location>
        <position position="207"/>
    </location>
    <ligand>
        <name>Mo-molybdopterin</name>
        <dbReference type="ChEBI" id="CHEBI:71302"/>
    </ligand>
</feature>
<feature type="binding site">
    <location>
        <begin position="218"/>
        <end position="220"/>
    </location>
    <ligand>
        <name>Mo-molybdopterin</name>
        <dbReference type="ChEBI" id="CHEBI:71302"/>
    </ligand>
</feature>
<feature type="sequence conflict" description="In Ref. 1; AAF13276." evidence="6" ref="1">
    <original>L</original>
    <variation>S</variation>
    <location>
        <position position="206"/>
    </location>
</feature>
<feature type="sequence conflict" description="In Ref. 1; AAF13276." evidence="6" ref="1">
    <original>D</original>
    <variation>H</variation>
    <location>
        <position position="251"/>
    </location>
</feature>
<feature type="strand" evidence="7">
    <location>
        <begin position="8"/>
        <end position="10"/>
    </location>
</feature>
<feature type="strand" evidence="7">
    <location>
        <begin position="21"/>
        <end position="24"/>
    </location>
</feature>
<feature type="turn" evidence="7">
    <location>
        <begin position="25"/>
        <end position="28"/>
    </location>
</feature>
<feature type="strand" evidence="7">
    <location>
        <begin position="29"/>
        <end position="31"/>
    </location>
</feature>
<feature type="helix" evidence="7">
    <location>
        <begin position="34"/>
        <end position="37"/>
    </location>
</feature>
<feature type="helix" evidence="7">
    <location>
        <begin position="45"/>
        <end position="47"/>
    </location>
</feature>
<feature type="strand" evidence="7">
    <location>
        <begin position="58"/>
        <end position="60"/>
    </location>
</feature>
<feature type="strand" evidence="7">
    <location>
        <begin position="66"/>
        <end position="75"/>
    </location>
</feature>
<feature type="strand" evidence="7">
    <location>
        <begin position="78"/>
        <end position="80"/>
    </location>
</feature>
<feature type="helix" evidence="7">
    <location>
        <begin position="81"/>
        <end position="85"/>
    </location>
</feature>
<feature type="strand" evidence="7">
    <location>
        <begin position="89"/>
        <end position="97"/>
    </location>
</feature>
<feature type="turn" evidence="7">
    <location>
        <begin position="99"/>
        <end position="102"/>
    </location>
</feature>
<feature type="helix" evidence="7">
    <location>
        <begin position="103"/>
        <end position="109"/>
    </location>
</feature>
<feature type="strand" evidence="7">
    <location>
        <begin position="122"/>
        <end position="131"/>
    </location>
</feature>
<feature type="helix" evidence="7">
    <location>
        <begin position="132"/>
        <end position="137"/>
    </location>
</feature>
<feature type="turn" evidence="7">
    <location>
        <begin position="138"/>
        <end position="140"/>
    </location>
</feature>
<feature type="strand" evidence="7">
    <location>
        <begin position="154"/>
        <end position="160"/>
    </location>
</feature>
<feature type="helix" evidence="7">
    <location>
        <begin position="164"/>
        <end position="166"/>
    </location>
</feature>
<feature type="strand" evidence="7">
    <location>
        <begin position="172"/>
        <end position="176"/>
    </location>
</feature>
<feature type="helix" evidence="7">
    <location>
        <begin position="177"/>
        <end position="181"/>
    </location>
</feature>
<feature type="helix" evidence="7">
    <location>
        <begin position="183"/>
        <end position="185"/>
    </location>
</feature>
<feature type="strand" evidence="7">
    <location>
        <begin position="188"/>
        <end position="193"/>
    </location>
</feature>
<feature type="turn" evidence="7">
    <location>
        <begin position="200"/>
        <end position="205"/>
    </location>
</feature>
<feature type="strand" evidence="7">
    <location>
        <begin position="207"/>
        <end position="209"/>
    </location>
</feature>
<feature type="helix" evidence="7">
    <location>
        <begin position="215"/>
        <end position="217"/>
    </location>
</feature>
<feature type="strand" evidence="7">
    <location>
        <begin position="221"/>
        <end position="230"/>
    </location>
</feature>
<feature type="helix" evidence="7">
    <location>
        <begin position="235"/>
        <end position="238"/>
    </location>
</feature>
<feature type="strand" evidence="7">
    <location>
        <begin position="239"/>
        <end position="241"/>
    </location>
</feature>
<feature type="turn" evidence="7">
    <location>
        <begin position="250"/>
        <end position="252"/>
    </location>
</feature>
<feature type="helix" evidence="7">
    <location>
        <begin position="255"/>
        <end position="257"/>
    </location>
</feature>
<feature type="strand" evidence="7">
    <location>
        <begin position="267"/>
        <end position="270"/>
    </location>
</feature>
<feature type="strand" evidence="7">
    <location>
        <begin position="275"/>
        <end position="279"/>
    </location>
</feature>
<feature type="strand" evidence="7">
    <location>
        <begin position="281"/>
        <end position="291"/>
    </location>
</feature>
<feature type="strand" evidence="7">
    <location>
        <begin position="298"/>
        <end position="306"/>
    </location>
</feature>
<feature type="strand" evidence="7">
    <location>
        <begin position="315"/>
        <end position="322"/>
    </location>
</feature>
<feature type="strand" evidence="7">
    <location>
        <begin position="326"/>
        <end position="328"/>
    </location>
</feature>
<feature type="strand" evidence="7">
    <location>
        <begin position="337"/>
        <end position="347"/>
    </location>
</feature>
<feature type="strand" evidence="7">
    <location>
        <begin position="349"/>
        <end position="357"/>
    </location>
</feature>
<feature type="helix" evidence="7">
    <location>
        <begin position="367"/>
        <end position="370"/>
    </location>
</feature>
<feature type="strand" evidence="7">
    <location>
        <begin position="382"/>
        <end position="388"/>
    </location>
</feature>
<organism>
    <name type="scientific">Arabidopsis thaliana</name>
    <name type="common">Mouse-ear cress</name>
    <dbReference type="NCBI Taxonomy" id="3702"/>
    <lineage>
        <taxon>Eukaryota</taxon>
        <taxon>Viridiplantae</taxon>
        <taxon>Streptophyta</taxon>
        <taxon>Embryophyta</taxon>
        <taxon>Tracheophyta</taxon>
        <taxon>Spermatophyta</taxon>
        <taxon>Magnoliopsida</taxon>
        <taxon>eudicotyledons</taxon>
        <taxon>Gunneridae</taxon>
        <taxon>Pentapetalae</taxon>
        <taxon>rosids</taxon>
        <taxon>malvids</taxon>
        <taxon>Brassicales</taxon>
        <taxon>Brassicaceae</taxon>
        <taxon>Camelineae</taxon>
        <taxon>Arabidopsis</taxon>
    </lineage>
</organism>
<sequence length="393" mass="43329">MPGIRGPSEYSQEPPRHPSLKVNAKEPFNAEPPRSALVSSYVTPVDLFYKRNHGPIPIVDHLQSYSVTLTGLIQNPRKLFIKDIRSLPKYNVTATLQCAGNRRTAMSKVRNVRGVGWDVSAIGNAVWGGAKLADVLELVGIPKLTASTNLGARHVEFVSVDRCKEENGGPYKASITLSQATNPEADVLLAYEMNGETLNRDHGFPLRVVVPGVIGARSVKWLDSINVIAEESQGFFMQKDYKMFPPSVNWDNINWSSRRPQMDFPVQSAICSVEDVQMVKPGKVSIKGYAVSGGGRGIERVDISLDGGKNWVEASRTQEPGKQYISEHSSSDKWAWVLFEATIDVSQTTEVIAKAVDSAANVQPENVESVWNLRGVLNTSWHRVLLRLGHSNL</sequence>
<evidence type="ECO:0000255" key="1"/>
<evidence type="ECO:0000256" key="2">
    <source>
        <dbReference type="SAM" id="MobiDB-lite"/>
    </source>
</evidence>
<evidence type="ECO:0000269" key="3">
    <source>
    </source>
</evidence>
<evidence type="ECO:0000269" key="4">
    <source>
    </source>
</evidence>
<evidence type="ECO:0000269" key="5">
    <source>
    </source>
</evidence>
<evidence type="ECO:0000305" key="6"/>
<evidence type="ECO:0007829" key="7">
    <source>
        <dbReference type="PDB" id="1OGP"/>
    </source>
</evidence>
<gene>
    <name type="primary">SOX</name>
    <name type="synonym">MCP</name>
    <name type="ordered locus">At3g01910</name>
    <name type="ORF">F1C9.31</name>
    <name type="ORF">F28J7.38</name>
</gene>
<comment type="function">
    <text>Probably involved in sulfite oxidative detoxification.</text>
</comment>
<comment type="catalytic activity">
    <reaction evidence="3">
        <text>sulfite + O2 + H2O = sulfate + H2O2</text>
        <dbReference type="Rhea" id="RHEA:24600"/>
        <dbReference type="ChEBI" id="CHEBI:15377"/>
        <dbReference type="ChEBI" id="CHEBI:15379"/>
        <dbReference type="ChEBI" id="CHEBI:16189"/>
        <dbReference type="ChEBI" id="CHEBI:16240"/>
        <dbReference type="ChEBI" id="CHEBI:17359"/>
        <dbReference type="EC" id="1.8.3.1"/>
    </reaction>
</comment>
<comment type="cofactor">
    <cofactor evidence="3 5">
        <name>Mo-molybdopterin</name>
        <dbReference type="ChEBI" id="CHEBI:71302"/>
    </cofactor>
    <text evidence="3 5">Binds 1 Mo-molybdopterin (Mo-MPT) cofactor per subunit.</text>
</comment>
<comment type="biophysicochemical properties">
    <kinetics>
        <KM>33.8 uM for sulfite (at pH 8.0 and 25 degrees Celsius)</KM>
    </kinetics>
</comment>
<comment type="pathway">
    <text>Energy metabolism; sulfur metabolism.</text>
</comment>
<comment type="subunit">
    <text evidence="3 5">Predominantly monomer; also homodimer.</text>
</comment>
<comment type="subcellular location">
    <subcellularLocation>
        <location evidence="3 4">Peroxisome</location>
    </subcellularLocation>
</comment>
<comment type="alternative products">
    <event type="alternative splicing"/>
    <isoform>
        <id>Q9S850-1</id>
        <name>1</name>
        <sequence type="displayed"/>
    </isoform>
    <text>A number of isoforms are produced. According to EST sequences.</text>
</comment>
<comment type="caution">
    <text evidence="6">Lacks the conserved cytochrome b5 heme-binding domain present in other sulfite oxidases.</text>
</comment>
<name>SUOX_ARATH</name>
<keyword id="KW-0002">3D-structure</keyword>
<keyword id="KW-0025">Alternative splicing</keyword>
<keyword id="KW-0479">Metal-binding</keyword>
<keyword id="KW-0500">Molybdenum</keyword>
<keyword id="KW-0560">Oxidoreductase</keyword>
<keyword id="KW-0576">Peroxisome</keyword>
<keyword id="KW-1185">Reference proteome</keyword>
<reference key="1">
    <citation type="journal article" date="2001" name="J. Biol. Chem.">
        <title>Identification and biochemical characterization of Arabidopsis thaliana sulfite oxidase. A new player in plant sulfur metabolism.</title>
        <authorList>
            <person name="Eilers T."/>
            <person name="Schwarz G."/>
            <person name="Brinkmann H."/>
            <person name="Witt C."/>
            <person name="Richter T."/>
            <person name="Nieder J."/>
            <person name="Koch B."/>
            <person name="Hille R."/>
            <person name="Haensch R."/>
            <person name="Mendel R.R."/>
        </authorList>
    </citation>
    <scope>NUCLEOTIDE SEQUENCE [MRNA]</scope>
    <scope>CATALYTIC ACTIVITY</scope>
    <scope>SUBUNIT</scope>
    <scope>COFACTOR</scope>
    <scope>SUBCELLULAR LOCATION</scope>
    <source>
        <strain>cv. Columbia</strain>
    </source>
</reference>
<reference key="2">
    <citation type="journal article" date="2002" name="J. Exp. Bot.">
        <title>Molecular cloning and characterization of plant genes encoding novel peroxisomal molybdoenzymes of the sulphite oxidase family.</title>
        <authorList>
            <person name="Nakamura T."/>
            <person name="Meyer C."/>
            <person name="Sano H."/>
        </authorList>
    </citation>
    <scope>NUCLEOTIDE SEQUENCE [MRNA]</scope>
    <scope>SUBCELLULAR LOCATION</scope>
    <source>
        <strain>cv. Columbia</strain>
    </source>
</reference>
<reference key="3">
    <citation type="journal article" date="2000" name="Nature">
        <title>Sequence and analysis of chromosome 3 of the plant Arabidopsis thaliana.</title>
        <authorList>
            <person name="Salanoubat M."/>
            <person name="Lemcke K."/>
            <person name="Rieger M."/>
            <person name="Ansorge W."/>
            <person name="Unseld M."/>
            <person name="Fartmann B."/>
            <person name="Valle G."/>
            <person name="Bloecker H."/>
            <person name="Perez-Alonso M."/>
            <person name="Obermaier B."/>
            <person name="Delseny M."/>
            <person name="Boutry M."/>
            <person name="Grivell L.A."/>
            <person name="Mache R."/>
            <person name="Puigdomenech P."/>
            <person name="De Simone V."/>
            <person name="Choisne N."/>
            <person name="Artiguenave F."/>
            <person name="Robert C."/>
            <person name="Brottier P."/>
            <person name="Wincker P."/>
            <person name="Cattolico L."/>
            <person name="Weissenbach J."/>
            <person name="Saurin W."/>
            <person name="Quetier F."/>
            <person name="Schaefer M."/>
            <person name="Mueller-Auer S."/>
            <person name="Gabel C."/>
            <person name="Fuchs M."/>
            <person name="Benes V."/>
            <person name="Wurmbach E."/>
            <person name="Drzonek H."/>
            <person name="Erfle H."/>
            <person name="Jordan N."/>
            <person name="Bangert S."/>
            <person name="Wiedelmann R."/>
            <person name="Kranz H."/>
            <person name="Voss H."/>
            <person name="Holland R."/>
            <person name="Brandt P."/>
            <person name="Nyakatura G."/>
            <person name="Vezzi A."/>
            <person name="D'Angelo M."/>
            <person name="Pallavicini A."/>
            <person name="Toppo S."/>
            <person name="Simionati B."/>
            <person name="Conrad A."/>
            <person name="Hornischer K."/>
            <person name="Kauer G."/>
            <person name="Loehnert T.-H."/>
            <person name="Nordsiek G."/>
            <person name="Reichelt J."/>
            <person name="Scharfe M."/>
            <person name="Schoen O."/>
            <person name="Bargues M."/>
            <person name="Terol J."/>
            <person name="Climent J."/>
            <person name="Navarro P."/>
            <person name="Collado C."/>
            <person name="Perez-Perez A."/>
            <person name="Ottenwaelder B."/>
            <person name="Duchemin D."/>
            <person name="Cooke R."/>
            <person name="Laudie M."/>
            <person name="Berger-Llauro C."/>
            <person name="Purnelle B."/>
            <person name="Masuy D."/>
            <person name="de Haan M."/>
            <person name="Maarse A.C."/>
            <person name="Alcaraz J.-P."/>
            <person name="Cottet A."/>
            <person name="Casacuberta E."/>
            <person name="Monfort A."/>
            <person name="Argiriou A."/>
            <person name="Flores M."/>
            <person name="Liguori R."/>
            <person name="Vitale D."/>
            <person name="Mannhaupt G."/>
            <person name="Haase D."/>
            <person name="Schoof H."/>
            <person name="Rudd S."/>
            <person name="Zaccaria P."/>
            <person name="Mewes H.-W."/>
            <person name="Mayer K.F.X."/>
            <person name="Kaul S."/>
            <person name="Town C.D."/>
            <person name="Koo H.L."/>
            <person name="Tallon L.J."/>
            <person name="Jenkins J."/>
            <person name="Rooney T."/>
            <person name="Rizzo M."/>
            <person name="Walts A."/>
            <person name="Utterback T."/>
            <person name="Fujii C.Y."/>
            <person name="Shea T.P."/>
            <person name="Creasy T.H."/>
            <person name="Haas B."/>
            <person name="Maiti R."/>
            <person name="Wu D."/>
            <person name="Peterson J."/>
            <person name="Van Aken S."/>
            <person name="Pai G."/>
            <person name="Militscher J."/>
            <person name="Sellers P."/>
            <person name="Gill J.E."/>
            <person name="Feldblyum T.V."/>
            <person name="Preuss D."/>
            <person name="Lin X."/>
            <person name="Nierman W.C."/>
            <person name="Salzberg S.L."/>
            <person name="White O."/>
            <person name="Venter J.C."/>
            <person name="Fraser C.M."/>
            <person name="Kaneko T."/>
            <person name="Nakamura Y."/>
            <person name="Sato S."/>
            <person name="Kato T."/>
            <person name="Asamizu E."/>
            <person name="Sasamoto S."/>
            <person name="Kimura T."/>
            <person name="Idesawa K."/>
            <person name="Kawashima K."/>
            <person name="Kishida Y."/>
            <person name="Kiyokawa C."/>
            <person name="Kohara M."/>
            <person name="Matsumoto M."/>
            <person name="Matsuno A."/>
            <person name="Muraki A."/>
            <person name="Nakayama S."/>
            <person name="Nakazaki N."/>
            <person name="Shinpo S."/>
            <person name="Takeuchi C."/>
            <person name="Wada T."/>
            <person name="Watanabe A."/>
            <person name="Yamada M."/>
            <person name="Yasuda M."/>
            <person name="Tabata S."/>
        </authorList>
    </citation>
    <scope>NUCLEOTIDE SEQUENCE [LARGE SCALE GENOMIC DNA]</scope>
    <source>
        <strain>cv. Columbia</strain>
    </source>
</reference>
<reference key="4">
    <citation type="journal article" date="2017" name="Plant J.">
        <title>Araport11: a complete reannotation of the Arabidopsis thaliana reference genome.</title>
        <authorList>
            <person name="Cheng C.Y."/>
            <person name="Krishnakumar V."/>
            <person name="Chan A.P."/>
            <person name="Thibaud-Nissen F."/>
            <person name="Schobel S."/>
            <person name="Town C.D."/>
        </authorList>
    </citation>
    <scope>GENOME REANNOTATION</scope>
    <source>
        <strain>cv. Columbia</strain>
    </source>
</reference>
<reference key="5">
    <citation type="journal article" date="2003" name="Science">
        <title>Empirical analysis of transcriptional activity in the Arabidopsis genome.</title>
        <authorList>
            <person name="Yamada K."/>
            <person name="Lim J."/>
            <person name="Dale J.M."/>
            <person name="Chen H."/>
            <person name="Shinn P."/>
            <person name="Palm C.J."/>
            <person name="Southwick A.M."/>
            <person name="Wu H.C."/>
            <person name="Kim C.J."/>
            <person name="Nguyen M."/>
            <person name="Pham P.K."/>
            <person name="Cheuk R.F."/>
            <person name="Karlin-Newmann G."/>
            <person name="Liu S.X."/>
            <person name="Lam B."/>
            <person name="Sakano H."/>
            <person name="Wu T."/>
            <person name="Yu G."/>
            <person name="Miranda M."/>
            <person name="Quach H.L."/>
            <person name="Tripp M."/>
            <person name="Chang C.H."/>
            <person name="Lee J.M."/>
            <person name="Toriumi M.J."/>
            <person name="Chan M.M."/>
            <person name="Tang C.C."/>
            <person name="Onodera C.S."/>
            <person name="Deng J.M."/>
            <person name="Akiyama K."/>
            <person name="Ansari Y."/>
            <person name="Arakawa T."/>
            <person name="Banh J."/>
            <person name="Banno F."/>
            <person name="Bowser L."/>
            <person name="Brooks S.Y."/>
            <person name="Carninci P."/>
            <person name="Chao Q."/>
            <person name="Choy N."/>
            <person name="Enju A."/>
            <person name="Goldsmith A.D."/>
            <person name="Gurjal M."/>
            <person name="Hansen N.F."/>
            <person name="Hayashizaki Y."/>
            <person name="Johnson-Hopson C."/>
            <person name="Hsuan V.W."/>
            <person name="Iida K."/>
            <person name="Karnes M."/>
            <person name="Khan S."/>
            <person name="Koesema E."/>
            <person name="Ishida J."/>
            <person name="Jiang P.X."/>
            <person name="Jones T."/>
            <person name="Kawai J."/>
            <person name="Kamiya A."/>
            <person name="Meyers C."/>
            <person name="Nakajima M."/>
            <person name="Narusaka M."/>
            <person name="Seki M."/>
            <person name="Sakurai T."/>
            <person name="Satou M."/>
            <person name="Tamse R."/>
            <person name="Vaysberg M."/>
            <person name="Wallender E.K."/>
            <person name="Wong C."/>
            <person name="Yamamura Y."/>
            <person name="Yuan S."/>
            <person name="Shinozaki K."/>
            <person name="Davis R.W."/>
            <person name="Theologis A."/>
            <person name="Ecker J.R."/>
        </authorList>
    </citation>
    <scope>NUCLEOTIDE SEQUENCE [LARGE SCALE MRNA]</scope>
    <source>
        <strain>cv. Columbia</strain>
    </source>
</reference>
<reference key="6">
    <citation type="journal article" date="2007" name="Plant Cell">
        <title>Proteome analysis of Arabidopsis leaf peroxisomes reveals novel targeting peptides, metabolic pathways, and defense mechanisms.</title>
        <authorList>
            <person name="Reumann S."/>
            <person name="Babujee L."/>
            <person name="Ma C."/>
            <person name="Wienkoop S."/>
            <person name="Siemsen T."/>
            <person name="Antonicelli G.E."/>
            <person name="Rasche N."/>
            <person name="Lueder F."/>
            <person name="Weckwerth W."/>
            <person name="Jahn O."/>
        </authorList>
    </citation>
    <scope>IDENTIFICATION BY MASS SPECTROMETRY</scope>
</reference>
<reference key="7">
    <citation type="journal article" date="2003" name="Structure">
        <title>The crystal structure of plant sulfite oxidase provides insights into sulfite oxidation in plants and animals.</title>
        <authorList>
            <person name="Schrader N."/>
            <person name="Fischer K."/>
            <person name="Theis K."/>
            <person name="Mendel R.R."/>
            <person name="Schwarz G."/>
            <person name="Kisker C."/>
        </authorList>
    </citation>
    <scope>X-RAY CRYSTALLOGRAPHY (2.6 ANGSTROMS) IN COMPLEX WITH MO-MOLYBDOPTERIN</scope>
    <scope>COFACTOR</scope>
    <scope>DOMAIN</scope>
    <scope>SUBUNIT</scope>
</reference>
<accession>Q9S850</accession>
<accession>Q9SNW2</accession>
<proteinExistence type="evidence at protein level"/>